<sequence>MIIVTGGAGFIGSNIVKGLNNLGIDDILVVDNLKNASKHKNLNRIKFRDYIDKEDFNLDYLTSFVNNNKVEAIFHQGACSDTMETDGKYMMKNNYEYTKNILHICLDKKIRLFYASSASVYGNGENGFEEDEKNEYPLNVYAFSKYHFDRYLNKLFKENKVNSQVVGLRYFNVYGPQENHKGRMASVAFHLFNQIKAGERMKIFEGSENFLRDFIHIDDVVSVNNFFFENPNKSGIFNCGTGNAESFVEIAKALKEVYKSASIEYIAFPDALRGKYQKYTQADLKKLRAAGYDKPFMNVNTGVKKYAEVLEKSGGYLM</sequence>
<accession>C0QZ84</accession>
<dbReference type="EC" id="5.1.3.20" evidence="1"/>
<dbReference type="EMBL" id="CP001357">
    <property type="protein sequence ID" value="ACN83172.1"/>
    <property type="molecule type" value="Genomic_DNA"/>
</dbReference>
<dbReference type="RefSeq" id="WP_012670222.1">
    <property type="nucleotide sequence ID" value="NC_012225.1"/>
</dbReference>
<dbReference type="SMR" id="C0QZ84"/>
<dbReference type="STRING" id="565034.BHWA1_00678"/>
<dbReference type="KEGG" id="bhy:BHWA1_00678"/>
<dbReference type="eggNOG" id="COG0451">
    <property type="taxonomic scope" value="Bacteria"/>
</dbReference>
<dbReference type="HOGENOM" id="CLU_007383_1_3_12"/>
<dbReference type="UniPathway" id="UPA00356">
    <property type="reaction ID" value="UER00440"/>
</dbReference>
<dbReference type="Proteomes" id="UP000001803">
    <property type="component" value="Chromosome"/>
</dbReference>
<dbReference type="GO" id="GO:0008712">
    <property type="term" value="F:ADP-glyceromanno-heptose 6-epimerase activity"/>
    <property type="evidence" value="ECO:0007669"/>
    <property type="project" value="UniProtKB-UniRule"/>
</dbReference>
<dbReference type="GO" id="GO:0050661">
    <property type="term" value="F:NADP binding"/>
    <property type="evidence" value="ECO:0007669"/>
    <property type="project" value="InterPro"/>
</dbReference>
<dbReference type="GO" id="GO:0097171">
    <property type="term" value="P:ADP-L-glycero-beta-D-manno-heptose biosynthetic process"/>
    <property type="evidence" value="ECO:0007669"/>
    <property type="project" value="UniProtKB-UniPathway"/>
</dbReference>
<dbReference type="GO" id="GO:0005975">
    <property type="term" value="P:carbohydrate metabolic process"/>
    <property type="evidence" value="ECO:0007669"/>
    <property type="project" value="UniProtKB-UniRule"/>
</dbReference>
<dbReference type="CDD" id="cd05248">
    <property type="entry name" value="ADP_GME_SDR_e"/>
    <property type="match status" value="1"/>
</dbReference>
<dbReference type="Gene3D" id="3.40.50.720">
    <property type="entry name" value="NAD(P)-binding Rossmann-like Domain"/>
    <property type="match status" value="1"/>
</dbReference>
<dbReference type="Gene3D" id="3.90.25.10">
    <property type="entry name" value="UDP-galactose 4-epimerase, domain 1"/>
    <property type="match status" value="1"/>
</dbReference>
<dbReference type="HAMAP" id="MF_01601">
    <property type="entry name" value="Heptose_epimerase"/>
    <property type="match status" value="1"/>
</dbReference>
<dbReference type="InterPro" id="IPR001509">
    <property type="entry name" value="Epimerase_deHydtase"/>
</dbReference>
<dbReference type="InterPro" id="IPR011912">
    <property type="entry name" value="Heptose_epim"/>
</dbReference>
<dbReference type="InterPro" id="IPR036291">
    <property type="entry name" value="NAD(P)-bd_dom_sf"/>
</dbReference>
<dbReference type="NCBIfam" id="TIGR02197">
    <property type="entry name" value="heptose_epim"/>
    <property type="match status" value="1"/>
</dbReference>
<dbReference type="PANTHER" id="PTHR43103:SF3">
    <property type="entry name" value="ADP-L-GLYCERO-D-MANNO-HEPTOSE-6-EPIMERASE"/>
    <property type="match status" value="1"/>
</dbReference>
<dbReference type="PANTHER" id="PTHR43103">
    <property type="entry name" value="NUCLEOSIDE-DIPHOSPHATE-SUGAR EPIMERASE"/>
    <property type="match status" value="1"/>
</dbReference>
<dbReference type="Pfam" id="PF01370">
    <property type="entry name" value="Epimerase"/>
    <property type="match status" value="1"/>
</dbReference>
<dbReference type="SUPFAM" id="SSF51735">
    <property type="entry name" value="NAD(P)-binding Rossmann-fold domains"/>
    <property type="match status" value="1"/>
</dbReference>
<reference key="1">
    <citation type="journal article" date="2009" name="PLoS ONE">
        <title>Genome sequence of the pathogenic intestinal spirochete Brachyspira hyodysenteriae reveals adaptations to its lifestyle in the porcine large intestine.</title>
        <authorList>
            <person name="Bellgard M.I."/>
            <person name="Wanchanthuek P."/>
            <person name="La T."/>
            <person name="Ryan K."/>
            <person name="Moolhuijzen P."/>
            <person name="Albertyn Z."/>
            <person name="Shaban B."/>
            <person name="Motro Y."/>
            <person name="Dunn D.S."/>
            <person name="Schibeci D."/>
            <person name="Hunter A."/>
            <person name="Barrero R."/>
            <person name="Phillips N.D."/>
            <person name="Hampson D.J."/>
        </authorList>
    </citation>
    <scope>NUCLEOTIDE SEQUENCE [LARGE SCALE GENOMIC DNA]</scope>
    <source>
        <strain>ATCC 49526 / WA1</strain>
    </source>
</reference>
<gene>
    <name evidence="1" type="primary">hldD</name>
    <name type="ordered locus">BHWA1_00678</name>
</gene>
<protein>
    <recommendedName>
        <fullName evidence="1">ADP-L-glycero-D-manno-heptose-6-epimerase</fullName>
        <ecNumber evidence="1">5.1.3.20</ecNumber>
    </recommendedName>
    <alternativeName>
        <fullName evidence="1">ADP-L-glycero-beta-D-manno-heptose-6-epimerase</fullName>
        <shortName evidence="1">ADP-glyceromanno-heptose 6-epimerase</shortName>
        <shortName evidence="1">ADP-hep 6-epimerase</shortName>
        <shortName evidence="1">AGME</shortName>
    </alternativeName>
</protein>
<name>HLDD_BRAHW</name>
<organism>
    <name type="scientific">Brachyspira hyodysenteriae (strain ATCC 49526 / WA1)</name>
    <dbReference type="NCBI Taxonomy" id="565034"/>
    <lineage>
        <taxon>Bacteria</taxon>
        <taxon>Pseudomonadati</taxon>
        <taxon>Spirochaetota</taxon>
        <taxon>Spirochaetia</taxon>
        <taxon>Brachyspirales</taxon>
        <taxon>Brachyspiraceae</taxon>
        <taxon>Brachyspira</taxon>
    </lineage>
</organism>
<evidence type="ECO:0000255" key="1">
    <source>
        <dbReference type="HAMAP-Rule" id="MF_01601"/>
    </source>
</evidence>
<proteinExistence type="inferred from homology"/>
<comment type="function">
    <text evidence="1">Catalyzes the interconversion between ADP-D-glycero-beta-D-manno-heptose and ADP-L-glycero-beta-D-manno-heptose via an epimerization at carbon 6 of the heptose.</text>
</comment>
<comment type="catalytic activity">
    <reaction evidence="1">
        <text>ADP-D-glycero-beta-D-manno-heptose = ADP-L-glycero-beta-D-manno-heptose</text>
        <dbReference type="Rhea" id="RHEA:17577"/>
        <dbReference type="ChEBI" id="CHEBI:59967"/>
        <dbReference type="ChEBI" id="CHEBI:61506"/>
        <dbReference type="EC" id="5.1.3.20"/>
    </reaction>
</comment>
<comment type="cofactor">
    <cofactor evidence="1">
        <name>NADP(+)</name>
        <dbReference type="ChEBI" id="CHEBI:58349"/>
    </cofactor>
    <text evidence="1">Binds 1 NADP(+) per subunit.</text>
</comment>
<comment type="pathway">
    <text evidence="1">Nucleotide-sugar biosynthesis; ADP-L-glycero-beta-D-manno-heptose biosynthesis; ADP-L-glycero-beta-D-manno-heptose from D-glycero-beta-D-manno-heptose 7-phosphate: step 4/4.</text>
</comment>
<comment type="subunit">
    <text evidence="1">Homopentamer.</text>
</comment>
<comment type="domain">
    <text evidence="1">Contains a large N-terminal NADP-binding domain, and a smaller C-terminal substrate-binding domain.</text>
</comment>
<comment type="similarity">
    <text evidence="1">Belongs to the NAD(P)-dependent epimerase/dehydratase family. HldD subfamily.</text>
</comment>
<feature type="chain" id="PRO_1000185786" description="ADP-L-glycero-D-manno-heptose-6-epimerase">
    <location>
        <begin position="1"/>
        <end position="318"/>
    </location>
</feature>
<feature type="active site" description="Proton acceptor" evidence="1">
    <location>
        <position position="141"/>
    </location>
</feature>
<feature type="active site" description="Proton acceptor" evidence="1">
    <location>
        <position position="181"/>
    </location>
</feature>
<feature type="binding site" evidence="1">
    <location>
        <begin position="10"/>
        <end position="11"/>
    </location>
    <ligand>
        <name>NADP(+)</name>
        <dbReference type="ChEBI" id="CHEBI:58349"/>
    </ligand>
</feature>
<feature type="binding site" evidence="1">
    <location>
        <begin position="31"/>
        <end position="32"/>
    </location>
    <ligand>
        <name>NADP(+)</name>
        <dbReference type="ChEBI" id="CHEBI:58349"/>
    </ligand>
</feature>
<feature type="binding site" evidence="1">
    <location>
        <position position="38"/>
    </location>
    <ligand>
        <name>NADP(+)</name>
        <dbReference type="ChEBI" id="CHEBI:58349"/>
    </ligand>
</feature>
<feature type="binding site" evidence="1">
    <location>
        <position position="53"/>
    </location>
    <ligand>
        <name>NADP(+)</name>
        <dbReference type="ChEBI" id="CHEBI:58349"/>
    </ligand>
</feature>
<feature type="binding site" evidence="1">
    <location>
        <begin position="76"/>
        <end position="80"/>
    </location>
    <ligand>
        <name>NADP(+)</name>
        <dbReference type="ChEBI" id="CHEBI:58349"/>
    </ligand>
</feature>
<feature type="binding site" evidence="1">
    <location>
        <position position="93"/>
    </location>
    <ligand>
        <name>NADP(+)</name>
        <dbReference type="ChEBI" id="CHEBI:58349"/>
    </ligand>
</feature>
<feature type="binding site" evidence="1">
    <location>
        <position position="145"/>
    </location>
    <ligand>
        <name>NADP(+)</name>
        <dbReference type="ChEBI" id="CHEBI:58349"/>
    </ligand>
</feature>
<feature type="binding site" evidence="1">
    <location>
        <position position="172"/>
    </location>
    <ligand>
        <name>substrate</name>
    </ligand>
</feature>
<feature type="binding site" evidence="1">
    <location>
        <position position="173"/>
    </location>
    <ligand>
        <name>NADP(+)</name>
        <dbReference type="ChEBI" id="CHEBI:58349"/>
    </ligand>
</feature>
<feature type="binding site" evidence="1">
    <location>
        <position position="181"/>
    </location>
    <ligand>
        <name>NADP(+)</name>
        <dbReference type="ChEBI" id="CHEBI:58349"/>
    </ligand>
</feature>
<feature type="binding site" evidence="1">
    <location>
        <position position="183"/>
    </location>
    <ligand>
        <name>substrate</name>
    </ligand>
</feature>
<feature type="binding site" evidence="1">
    <location>
        <position position="190"/>
    </location>
    <ligand>
        <name>substrate</name>
    </ligand>
</feature>
<feature type="binding site" evidence="1">
    <location>
        <begin position="204"/>
        <end position="207"/>
    </location>
    <ligand>
        <name>substrate</name>
    </ligand>
</feature>
<feature type="binding site" evidence="1">
    <location>
        <position position="212"/>
    </location>
    <ligand>
        <name>substrate</name>
    </ligand>
</feature>
<feature type="binding site" evidence="1">
    <location>
        <position position="276"/>
    </location>
    <ligand>
        <name>substrate</name>
    </ligand>
</feature>
<keyword id="KW-0119">Carbohydrate metabolism</keyword>
<keyword id="KW-0413">Isomerase</keyword>
<keyword id="KW-0521">NADP</keyword>